<keyword id="KW-0028">Amino-acid biosynthesis</keyword>
<keyword id="KW-0057">Aromatic amino acid biosynthesis</keyword>
<keyword id="KW-0274">FAD</keyword>
<keyword id="KW-0285">Flavoprotein</keyword>
<keyword id="KW-0288">FMN</keyword>
<keyword id="KW-0456">Lyase</keyword>
<keyword id="KW-0521">NADP</keyword>
<dbReference type="EC" id="4.2.3.5" evidence="1"/>
<dbReference type="EMBL" id="CP000503">
    <property type="protein sequence ID" value="ABM24395.1"/>
    <property type="molecule type" value="Genomic_DNA"/>
</dbReference>
<dbReference type="RefSeq" id="WP_006082233.1">
    <property type="nucleotide sequence ID" value="NC_008750.1"/>
</dbReference>
<dbReference type="SMR" id="A1RIA0"/>
<dbReference type="GeneID" id="11772932"/>
<dbReference type="KEGG" id="shw:Sputw3181_1557"/>
<dbReference type="HOGENOM" id="CLU_034547_0_2_6"/>
<dbReference type="UniPathway" id="UPA00053">
    <property type="reaction ID" value="UER00090"/>
</dbReference>
<dbReference type="Proteomes" id="UP000002597">
    <property type="component" value="Chromosome"/>
</dbReference>
<dbReference type="GO" id="GO:0005829">
    <property type="term" value="C:cytosol"/>
    <property type="evidence" value="ECO:0007669"/>
    <property type="project" value="TreeGrafter"/>
</dbReference>
<dbReference type="GO" id="GO:0004107">
    <property type="term" value="F:chorismate synthase activity"/>
    <property type="evidence" value="ECO:0007669"/>
    <property type="project" value="UniProtKB-UniRule"/>
</dbReference>
<dbReference type="GO" id="GO:0010181">
    <property type="term" value="F:FMN binding"/>
    <property type="evidence" value="ECO:0007669"/>
    <property type="project" value="TreeGrafter"/>
</dbReference>
<dbReference type="GO" id="GO:0008652">
    <property type="term" value="P:amino acid biosynthetic process"/>
    <property type="evidence" value="ECO:0007669"/>
    <property type="project" value="UniProtKB-KW"/>
</dbReference>
<dbReference type="GO" id="GO:0009073">
    <property type="term" value="P:aromatic amino acid family biosynthetic process"/>
    <property type="evidence" value="ECO:0007669"/>
    <property type="project" value="UniProtKB-KW"/>
</dbReference>
<dbReference type="GO" id="GO:0009423">
    <property type="term" value="P:chorismate biosynthetic process"/>
    <property type="evidence" value="ECO:0007669"/>
    <property type="project" value="UniProtKB-UniRule"/>
</dbReference>
<dbReference type="CDD" id="cd07304">
    <property type="entry name" value="Chorismate_synthase"/>
    <property type="match status" value="1"/>
</dbReference>
<dbReference type="FunFam" id="3.60.150.10:FF:000001">
    <property type="entry name" value="Chorismate synthase"/>
    <property type="match status" value="1"/>
</dbReference>
<dbReference type="Gene3D" id="3.60.150.10">
    <property type="entry name" value="Chorismate synthase AroC"/>
    <property type="match status" value="1"/>
</dbReference>
<dbReference type="HAMAP" id="MF_00300">
    <property type="entry name" value="Chorismate_synth"/>
    <property type="match status" value="1"/>
</dbReference>
<dbReference type="InterPro" id="IPR000453">
    <property type="entry name" value="Chorismate_synth"/>
</dbReference>
<dbReference type="InterPro" id="IPR035904">
    <property type="entry name" value="Chorismate_synth_AroC_sf"/>
</dbReference>
<dbReference type="InterPro" id="IPR020541">
    <property type="entry name" value="Chorismate_synthase_CS"/>
</dbReference>
<dbReference type="NCBIfam" id="TIGR00033">
    <property type="entry name" value="aroC"/>
    <property type="match status" value="1"/>
</dbReference>
<dbReference type="NCBIfam" id="NF003793">
    <property type="entry name" value="PRK05382.1"/>
    <property type="match status" value="1"/>
</dbReference>
<dbReference type="PANTHER" id="PTHR21085">
    <property type="entry name" value="CHORISMATE SYNTHASE"/>
    <property type="match status" value="1"/>
</dbReference>
<dbReference type="PANTHER" id="PTHR21085:SF0">
    <property type="entry name" value="CHORISMATE SYNTHASE"/>
    <property type="match status" value="1"/>
</dbReference>
<dbReference type="Pfam" id="PF01264">
    <property type="entry name" value="Chorismate_synt"/>
    <property type="match status" value="1"/>
</dbReference>
<dbReference type="PIRSF" id="PIRSF001456">
    <property type="entry name" value="Chorismate_synth"/>
    <property type="match status" value="1"/>
</dbReference>
<dbReference type="SUPFAM" id="SSF103263">
    <property type="entry name" value="Chorismate synthase, AroC"/>
    <property type="match status" value="1"/>
</dbReference>
<dbReference type="PROSITE" id="PS00787">
    <property type="entry name" value="CHORISMATE_SYNTHASE_1"/>
    <property type="match status" value="1"/>
</dbReference>
<dbReference type="PROSITE" id="PS00788">
    <property type="entry name" value="CHORISMATE_SYNTHASE_2"/>
    <property type="match status" value="1"/>
</dbReference>
<dbReference type="PROSITE" id="PS00789">
    <property type="entry name" value="CHORISMATE_SYNTHASE_3"/>
    <property type="match status" value="1"/>
</dbReference>
<comment type="function">
    <text evidence="1">Catalyzes the anti-1,4-elimination of the C-3 phosphate and the C-6 proR hydrogen from 5-enolpyruvylshikimate-3-phosphate (EPSP) to yield chorismate, which is the branch point compound that serves as the starting substrate for the three terminal pathways of aromatic amino acid biosynthesis. This reaction introduces a second double bond into the aromatic ring system.</text>
</comment>
<comment type="catalytic activity">
    <reaction evidence="1">
        <text>5-O-(1-carboxyvinyl)-3-phosphoshikimate = chorismate + phosphate</text>
        <dbReference type="Rhea" id="RHEA:21020"/>
        <dbReference type="ChEBI" id="CHEBI:29748"/>
        <dbReference type="ChEBI" id="CHEBI:43474"/>
        <dbReference type="ChEBI" id="CHEBI:57701"/>
        <dbReference type="EC" id="4.2.3.5"/>
    </reaction>
</comment>
<comment type="cofactor">
    <cofactor evidence="1">
        <name>FMNH2</name>
        <dbReference type="ChEBI" id="CHEBI:57618"/>
    </cofactor>
    <text evidence="1">Reduced FMN (FMNH(2)).</text>
</comment>
<comment type="pathway">
    <text evidence="1">Metabolic intermediate biosynthesis; chorismate biosynthesis; chorismate from D-erythrose 4-phosphate and phosphoenolpyruvate: step 7/7.</text>
</comment>
<comment type="subunit">
    <text evidence="1">Homotetramer.</text>
</comment>
<comment type="similarity">
    <text evidence="1">Belongs to the chorismate synthase family.</text>
</comment>
<evidence type="ECO:0000255" key="1">
    <source>
        <dbReference type="HAMAP-Rule" id="MF_00300"/>
    </source>
</evidence>
<evidence type="ECO:0000256" key="2">
    <source>
        <dbReference type="SAM" id="MobiDB-lite"/>
    </source>
</evidence>
<proteinExistence type="inferred from homology"/>
<name>AROC_SHESW</name>
<gene>
    <name evidence="1" type="primary">aroC</name>
    <name type="ordered locus">Sputw3181_1557</name>
</gene>
<accession>A1RIA0</accession>
<feature type="chain" id="PRO_1000022554" description="Chorismate synthase">
    <location>
        <begin position="1"/>
        <end position="364"/>
    </location>
</feature>
<feature type="region of interest" description="Disordered" evidence="2">
    <location>
        <begin position="41"/>
        <end position="60"/>
    </location>
</feature>
<feature type="binding site" evidence="1">
    <location>
        <position position="48"/>
    </location>
    <ligand>
        <name>NADP(+)</name>
        <dbReference type="ChEBI" id="CHEBI:58349"/>
    </ligand>
</feature>
<feature type="binding site" evidence="1">
    <location>
        <position position="54"/>
    </location>
    <ligand>
        <name>NADP(+)</name>
        <dbReference type="ChEBI" id="CHEBI:58349"/>
    </ligand>
</feature>
<feature type="binding site" evidence="1">
    <location>
        <begin position="125"/>
        <end position="127"/>
    </location>
    <ligand>
        <name>FMN</name>
        <dbReference type="ChEBI" id="CHEBI:58210"/>
    </ligand>
</feature>
<feature type="binding site" evidence="1">
    <location>
        <begin position="238"/>
        <end position="239"/>
    </location>
    <ligand>
        <name>FMN</name>
        <dbReference type="ChEBI" id="CHEBI:58210"/>
    </ligand>
</feature>
<feature type="binding site" evidence="1">
    <location>
        <position position="278"/>
    </location>
    <ligand>
        <name>FMN</name>
        <dbReference type="ChEBI" id="CHEBI:58210"/>
    </ligand>
</feature>
<feature type="binding site" evidence="1">
    <location>
        <begin position="293"/>
        <end position="297"/>
    </location>
    <ligand>
        <name>FMN</name>
        <dbReference type="ChEBI" id="CHEBI:58210"/>
    </ligand>
</feature>
<feature type="binding site" evidence="1">
    <location>
        <position position="319"/>
    </location>
    <ligand>
        <name>FMN</name>
        <dbReference type="ChEBI" id="CHEBI:58210"/>
    </ligand>
</feature>
<organism>
    <name type="scientific">Shewanella sp. (strain W3-18-1)</name>
    <dbReference type="NCBI Taxonomy" id="351745"/>
    <lineage>
        <taxon>Bacteria</taxon>
        <taxon>Pseudomonadati</taxon>
        <taxon>Pseudomonadota</taxon>
        <taxon>Gammaproteobacteria</taxon>
        <taxon>Alteromonadales</taxon>
        <taxon>Shewanellaceae</taxon>
        <taxon>Shewanella</taxon>
    </lineage>
</organism>
<reference key="1">
    <citation type="submission" date="2006-12" db="EMBL/GenBank/DDBJ databases">
        <title>Complete sequence of Shewanella sp. W3-18-1.</title>
        <authorList>
            <consortium name="US DOE Joint Genome Institute"/>
            <person name="Copeland A."/>
            <person name="Lucas S."/>
            <person name="Lapidus A."/>
            <person name="Barry K."/>
            <person name="Detter J.C."/>
            <person name="Glavina del Rio T."/>
            <person name="Hammon N."/>
            <person name="Israni S."/>
            <person name="Dalin E."/>
            <person name="Tice H."/>
            <person name="Pitluck S."/>
            <person name="Chain P."/>
            <person name="Malfatti S."/>
            <person name="Shin M."/>
            <person name="Vergez L."/>
            <person name="Schmutz J."/>
            <person name="Larimer F."/>
            <person name="Land M."/>
            <person name="Hauser L."/>
            <person name="Kyrpides N."/>
            <person name="Lykidis A."/>
            <person name="Tiedje J."/>
            <person name="Richardson P."/>
        </authorList>
    </citation>
    <scope>NUCLEOTIDE SEQUENCE [LARGE SCALE GENOMIC DNA]</scope>
    <source>
        <strain>W3-18-1</strain>
    </source>
</reference>
<protein>
    <recommendedName>
        <fullName evidence="1">Chorismate synthase</fullName>
        <shortName evidence="1">CS</shortName>
        <ecNumber evidence="1">4.2.3.5</ecNumber>
    </recommendedName>
    <alternativeName>
        <fullName evidence="1">5-enolpyruvylshikimate-3-phosphate phospholyase</fullName>
    </alternativeName>
</protein>
<sequence length="364" mass="39111">MSGNSIGQNFVVTTFGESHGVALGCIIDGCPPGLELTEADMQHDLDRRRPGTSRYTTARREPDEVRILSGVFEGKTTGTSIGLLIENTDQRSQDYSNIKDLFRPGHADYTYQQKYGMRDYRGGGRSSARETAMRVAAGAVAKKYLKQVHGIEIYGFMSQLGPICAQTIDLDQIEQNAFFFPDASKLEALDEYMRELKKSGDSIGAKISVIATGVPVGLGEPVFDRLDADIAHALMGINAVKGVEIGDGFGVVTQKGSEGRDLMSPQGFESNHAGGVLGGISSGQPIIAHIALKPTSSISVPGQSMTAQGEMAEVVTKGRHDPCVGIRAVPIAEAMLAIVLMDHLLRHRAQNQDVRSHTPVLGMR</sequence>